<comment type="function">
    <text evidence="2">Required during biogenesis of c-type cytochromes (cytochrome c6 and cytochrome f) at the step of heme attachment.</text>
</comment>
<comment type="subunit">
    <text evidence="1">May interact with ccs1.</text>
</comment>
<comment type="subcellular location">
    <subcellularLocation>
        <location evidence="2">Cellular thylakoid membrane</location>
        <topology evidence="2">Multi-pass membrane protein</topology>
    </subcellularLocation>
</comment>
<comment type="similarity">
    <text evidence="2">Belongs to the CcmF/CycK/Ccl1/NrfE/CcsA family.</text>
</comment>
<organism>
    <name type="scientific">Nostoc punctiforme (strain ATCC 29133 / PCC 73102)</name>
    <dbReference type="NCBI Taxonomy" id="63737"/>
    <lineage>
        <taxon>Bacteria</taxon>
        <taxon>Bacillati</taxon>
        <taxon>Cyanobacteriota</taxon>
        <taxon>Cyanophyceae</taxon>
        <taxon>Nostocales</taxon>
        <taxon>Nostocaceae</taxon>
        <taxon>Nostoc</taxon>
    </lineage>
</organism>
<feature type="chain" id="PRO_0000353702" description="Cytochrome c biogenesis protein CcsA">
    <location>
        <begin position="1"/>
        <end position="353"/>
    </location>
</feature>
<feature type="transmembrane region" description="Helical" evidence="2">
    <location>
        <begin position="15"/>
        <end position="35"/>
    </location>
</feature>
<feature type="transmembrane region" description="Helical" evidence="2">
    <location>
        <begin position="37"/>
        <end position="57"/>
    </location>
</feature>
<feature type="transmembrane region" description="Helical" evidence="2">
    <location>
        <begin position="68"/>
        <end position="88"/>
    </location>
</feature>
<feature type="transmembrane region" description="Helical" evidence="2">
    <location>
        <begin position="97"/>
        <end position="117"/>
    </location>
</feature>
<feature type="transmembrane region" description="Helical" evidence="2">
    <location>
        <begin position="142"/>
        <end position="162"/>
    </location>
</feature>
<feature type="transmembrane region" description="Helical" evidence="2">
    <location>
        <begin position="261"/>
        <end position="281"/>
    </location>
</feature>
<feature type="transmembrane region" description="Helical" evidence="2">
    <location>
        <begin position="288"/>
        <end position="308"/>
    </location>
</feature>
<feature type="transmembrane region" description="Helical" evidence="2">
    <location>
        <begin position="322"/>
        <end position="342"/>
    </location>
</feature>
<evidence type="ECO:0000250" key="1"/>
<evidence type="ECO:0000255" key="2">
    <source>
        <dbReference type="HAMAP-Rule" id="MF_01391"/>
    </source>
</evidence>
<sequence>MNLVVLQNWLDNASFAILFLTMLVYWGGAAFPNLPYLAALGTAGMAIANLCMATLLGARWIEAGYFPLSNLYESLFFLTWGITTVHLIAESSSRSRLVGVVTAPVAMLIAAFATMTLPSQMQASEPLVPALKSNWLMMHVSVMMLSYSALMVGALLAIAFLIVTRGQNIQLQGSSVGTGGYRSNGYRLHKAAELISQPPAPSAENNGFARFESSSNGNGNANTAVLNLVTTSEPQTVASAEPLSPQRLSLAETLDNISYRIIGLGFPLLTIGIIAGGVWANEAWGSYWSWDPKETWALITWLVFAAYLHARITRGWQGRRPAILAATGFVVVWICYLGVNLLGKGLHSYGWFF</sequence>
<proteinExistence type="inferred from homology"/>
<reference key="1">
    <citation type="journal article" date="2013" name="Plant Physiol.">
        <title>A Nostoc punctiforme Sugar Transporter Necessary to Establish a Cyanobacterium-Plant Symbiosis.</title>
        <authorList>
            <person name="Ekman M."/>
            <person name="Picossi S."/>
            <person name="Campbell E.L."/>
            <person name="Meeks J.C."/>
            <person name="Flores E."/>
        </authorList>
    </citation>
    <scope>NUCLEOTIDE SEQUENCE [LARGE SCALE GENOMIC DNA]</scope>
    <source>
        <strain>ATCC 29133 / PCC 73102</strain>
    </source>
</reference>
<name>CCSA_NOSP7</name>
<accession>B2ITV8</accession>
<gene>
    <name evidence="2" type="primary">ccsA</name>
    <name type="ordered locus">Npun_F5955</name>
</gene>
<dbReference type="EMBL" id="CP001037">
    <property type="protein sequence ID" value="ACC84246.1"/>
    <property type="molecule type" value="Genomic_DNA"/>
</dbReference>
<dbReference type="SMR" id="B2ITV8"/>
<dbReference type="STRING" id="63737.Npun_F5955"/>
<dbReference type="EnsemblBacteria" id="ACC84246">
    <property type="protein sequence ID" value="ACC84246"/>
    <property type="gene ID" value="Npun_F5955"/>
</dbReference>
<dbReference type="KEGG" id="npu:Npun_F5955"/>
<dbReference type="eggNOG" id="COG0755">
    <property type="taxonomic scope" value="Bacteria"/>
</dbReference>
<dbReference type="HOGENOM" id="CLU_049710_2_0_3"/>
<dbReference type="OrthoDB" id="9814290at2"/>
<dbReference type="PhylomeDB" id="B2ITV8"/>
<dbReference type="Proteomes" id="UP000001191">
    <property type="component" value="Chromosome"/>
</dbReference>
<dbReference type="GO" id="GO:0031676">
    <property type="term" value="C:plasma membrane-derived thylakoid membrane"/>
    <property type="evidence" value="ECO:0007669"/>
    <property type="project" value="UniProtKB-SubCell"/>
</dbReference>
<dbReference type="GO" id="GO:0020037">
    <property type="term" value="F:heme binding"/>
    <property type="evidence" value="ECO:0007669"/>
    <property type="project" value="InterPro"/>
</dbReference>
<dbReference type="GO" id="GO:0017004">
    <property type="term" value="P:cytochrome complex assembly"/>
    <property type="evidence" value="ECO:0007669"/>
    <property type="project" value="UniProtKB-UniRule"/>
</dbReference>
<dbReference type="HAMAP" id="MF_01391">
    <property type="entry name" value="CytC_CcsA"/>
    <property type="match status" value="1"/>
</dbReference>
<dbReference type="InterPro" id="IPR002541">
    <property type="entry name" value="Cyt_c_assembly"/>
</dbReference>
<dbReference type="InterPro" id="IPR017562">
    <property type="entry name" value="Cyt_c_biogenesis_CcsA"/>
</dbReference>
<dbReference type="InterPro" id="IPR045062">
    <property type="entry name" value="Cyt_c_biogenesis_CcsA/CcmC"/>
</dbReference>
<dbReference type="NCBIfam" id="TIGR03144">
    <property type="entry name" value="cytochr_II_ccsB"/>
    <property type="match status" value="1"/>
</dbReference>
<dbReference type="PANTHER" id="PTHR30071:SF1">
    <property type="entry name" value="CYTOCHROME B_B6 PROTEIN-RELATED"/>
    <property type="match status" value="1"/>
</dbReference>
<dbReference type="PANTHER" id="PTHR30071">
    <property type="entry name" value="HEME EXPORTER PROTEIN C"/>
    <property type="match status" value="1"/>
</dbReference>
<dbReference type="Pfam" id="PF01578">
    <property type="entry name" value="Cytochrom_C_asm"/>
    <property type="match status" value="1"/>
</dbReference>
<keyword id="KW-0201">Cytochrome c-type biogenesis</keyword>
<keyword id="KW-0472">Membrane</keyword>
<keyword id="KW-1185">Reference proteome</keyword>
<keyword id="KW-0793">Thylakoid</keyword>
<keyword id="KW-0812">Transmembrane</keyword>
<keyword id="KW-1133">Transmembrane helix</keyword>
<protein>
    <recommendedName>
        <fullName evidence="2">Cytochrome c biogenesis protein CcsA</fullName>
    </recommendedName>
</protein>